<organism>
    <name type="scientific">Saccharomyces cerevisiae (strain ATCC 204508 / S288c)</name>
    <name type="common">Baker's yeast</name>
    <dbReference type="NCBI Taxonomy" id="559292"/>
    <lineage>
        <taxon>Eukaryota</taxon>
        <taxon>Fungi</taxon>
        <taxon>Dikarya</taxon>
        <taxon>Ascomycota</taxon>
        <taxon>Saccharomycotina</taxon>
        <taxon>Saccharomycetes</taxon>
        <taxon>Saccharomycetales</taxon>
        <taxon>Saccharomycetaceae</taxon>
        <taxon>Saccharomyces</taxon>
    </lineage>
</organism>
<feature type="chain" id="PRO_0000299804" description="Putative uncharacterized protein YPL135C-A">
    <location>
        <begin position="1"/>
        <end position="57"/>
    </location>
</feature>
<evidence type="ECO:0000305" key="1"/>
<evidence type="ECO:0000305" key="2">
    <source>
    </source>
</evidence>
<dbReference type="EMBL" id="U43703">
    <property type="status" value="NOT_ANNOTATED_CDS"/>
    <property type="molecule type" value="Genomic_DNA"/>
</dbReference>
<dbReference type="EMBL" id="AF479984">
    <property type="protein sequence ID" value="AAL79297.1"/>
    <property type="molecule type" value="Genomic_DNA"/>
</dbReference>
<dbReference type="MINT" id="Q8TGK9"/>
<dbReference type="STRING" id="4932.YPL135C-A"/>
<dbReference type="PaxDb" id="4932-YPL135C-A"/>
<dbReference type="EnsemblFungi" id="YPL135C-A_mRNA">
    <property type="protein sequence ID" value="YPL135C-A"/>
    <property type="gene ID" value="YPL135C-A"/>
</dbReference>
<dbReference type="AGR" id="SGD:S000028720"/>
<dbReference type="SGD" id="S000028720">
    <property type="gene designation" value="YPL135C-A"/>
</dbReference>
<dbReference type="eggNOG" id="ENOG502SF0F">
    <property type="taxonomic scope" value="Eukaryota"/>
</dbReference>
<dbReference type="HOGENOM" id="CLU_2998233_0_0_1"/>
<name>YP135_YEAST</name>
<accession>Q8TGK9</accession>
<proteinExistence type="uncertain"/>
<gene>
    <name type="ordered locus">YPL135C-A</name>
</gene>
<comment type="miscellaneous">
    <text evidence="1">Completely overlaps ISU1.</text>
</comment>
<comment type="caution">
    <text evidence="2">Product of a dubious gene prediction unlikely to encode a functional protein. Because of that it is not part of the S.cerevisiae S288c complete/reference proteome set.</text>
</comment>
<protein>
    <recommendedName>
        <fullName>Putative uncharacterized protein YPL135C-A</fullName>
    </recommendedName>
</protein>
<sequence>MAEPHPKVLNLTSSITPVESLTLICNLITSPHAGAPTRPVPTLGNFLSNEPTFLGCV</sequence>
<reference key="1">
    <citation type="journal article" date="1997" name="Nature">
        <title>The nucleotide sequence of Saccharomyces cerevisiae chromosome XVI.</title>
        <authorList>
            <person name="Bussey H."/>
            <person name="Storms R.K."/>
            <person name="Ahmed A."/>
            <person name="Albermann K."/>
            <person name="Allen E."/>
            <person name="Ansorge W."/>
            <person name="Araujo R."/>
            <person name="Aparicio A."/>
            <person name="Barrell B.G."/>
            <person name="Badcock K."/>
            <person name="Benes V."/>
            <person name="Botstein D."/>
            <person name="Bowman S."/>
            <person name="Brueckner M."/>
            <person name="Carpenter J."/>
            <person name="Cherry J.M."/>
            <person name="Chung E."/>
            <person name="Churcher C.M."/>
            <person name="Coster F."/>
            <person name="Davis K."/>
            <person name="Davis R.W."/>
            <person name="Dietrich F.S."/>
            <person name="Delius H."/>
            <person name="DiPaolo T."/>
            <person name="Dubois E."/>
            <person name="Duesterhoeft A."/>
            <person name="Duncan M."/>
            <person name="Floeth M."/>
            <person name="Fortin N."/>
            <person name="Friesen J.D."/>
            <person name="Fritz C."/>
            <person name="Goffeau A."/>
            <person name="Hall J."/>
            <person name="Hebling U."/>
            <person name="Heumann K."/>
            <person name="Hilbert H."/>
            <person name="Hillier L.W."/>
            <person name="Hunicke-Smith S."/>
            <person name="Hyman R.W."/>
            <person name="Johnston M."/>
            <person name="Kalman S."/>
            <person name="Kleine K."/>
            <person name="Komp C."/>
            <person name="Kurdi O."/>
            <person name="Lashkari D."/>
            <person name="Lew H."/>
            <person name="Lin A."/>
            <person name="Lin D."/>
            <person name="Louis E.J."/>
            <person name="Marathe R."/>
            <person name="Messenguy F."/>
            <person name="Mewes H.-W."/>
            <person name="Mirtipati S."/>
            <person name="Moestl D."/>
            <person name="Mueller-Auer S."/>
            <person name="Namath A."/>
            <person name="Nentwich U."/>
            <person name="Oefner P."/>
            <person name="Pearson D."/>
            <person name="Petel F.X."/>
            <person name="Pohl T.M."/>
            <person name="Purnelle B."/>
            <person name="Rajandream M.A."/>
            <person name="Rechmann S."/>
            <person name="Rieger M."/>
            <person name="Riles L."/>
            <person name="Roberts D."/>
            <person name="Schaefer M."/>
            <person name="Scharfe M."/>
            <person name="Scherens B."/>
            <person name="Schramm S."/>
            <person name="Schroeder M."/>
            <person name="Sdicu A.-M."/>
            <person name="Tettelin H."/>
            <person name="Urrestarazu L.A."/>
            <person name="Ushinsky S."/>
            <person name="Vierendeels F."/>
            <person name="Vissers S."/>
            <person name="Voss H."/>
            <person name="Walsh S.V."/>
            <person name="Wambutt R."/>
            <person name="Wang Y."/>
            <person name="Wedler E."/>
            <person name="Wedler H."/>
            <person name="Winnett E."/>
            <person name="Zhong W.-W."/>
            <person name="Zollner A."/>
            <person name="Vo D.H."/>
            <person name="Hani J."/>
        </authorList>
    </citation>
    <scope>NUCLEOTIDE SEQUENCE [LARGE SCALE GENOMIC DNA]</scope>
    <source>
        <strain>ATCC 204508 / S288c</strain>
    </source>
</reference>
<reference key="2">
    <citation type="journal article" date="2014" name="G3 (Bethesda)">
        <title>The reference genome sequence of Saccharomyces cerevisiae: Then and now.</title>
        <authorList>
            <person name="Engel S.R."/>
            <person name="Dietrich F.S."/>
            <person name="Fisk D.G."/>
            <person name="Binkley G."/>
            <person name="Balakrishnan R."/>
            <person name="Costanzo M.C."/>
            <person name="Dwight S.S."/>
            <person name="Hitz B.C."/>
            <person name="Karra K."/>
            <person name="Nash R.S."/>
            <person name="Weng S."/>
            <person name="Wong E.D."/>
            <person name="Lloyd P."/>
            <person name="Skrzypek M.S."/>
            <person name="Miyasato S.R."/>
            <person name="Simison M."/>
            <person name="Cherry J.M."/>
        </authorList>
    </citation>
    <scope>GENOME REANNOTATION</scope>
    <source>
        <strain>ATCC 204508 / S288c</strain>
    </source>
</reference>
<reference key="3">
    <citation type="journal article" date="2002" name="Nat. Biotechnol.">
        <title>An integrated approach for finding overlooked genes in yeast.</title>
        <authorList>
            <person name="Kumar A."/>
            <person name="Harrison P.M."/>
            <person name="Cheung K.-H."/>
            <person name="Lan N."/>
            <person name="Echols N."/>
            <person name="Bertone P."/>
            <person name="Miller P."/>
            <person name="Gerstein M.B."/>
            <person name="Snyder M."/>
        </authorList>
    </citation>
    <scope>NUCLEOTIDE SEQUENCE [GENOMIC DNA]</scope>
</reference>